<reference key="1">
    <citation type="journal article" date="2003" name="Appl. Microbiol. Biotechnol.">
        <title>The Corynebacterium glutamicum genome: features and impacts on biotechnological processes.</title>
        <authorList>
            <person name="Ikeda M."/>
            <person name="Nakagawa S."/>
        </authorList>
    </citation>
    <scope>NUCLEOTIDE SEQUENCE [LARGE SCALE GENOMIC DNA]</scope>
    <source>
        <strain>ATCC 13032 / DSM 20300 / JCM 1318 / BCRC 11384 / CCUG 27702 / LMG 3730 / NBRC 12168 / NCIMB 10025 / NRRL B-2784 / 534</strain>
    </source>
</reference>
<reference key="2">
    <citation type="journal article" date="2003" name="J. Biotechnol.">
        <title>The complete Corynebacterium glutamicum ATCC 13032 genome sequence and its impact on the production of L-aspartate-derived amino acids and vitamins.</title>
        <authorList>
            <person name="Kalinowski J."/>
            <person name="Bathe B."/>
            <person name="Bartels D."/>
            <person name="Bischoff N."/>
            <person name="Bott M."/>
            <person name="Burkovski A."/>
            <person name="Dusch N."/>
            <person name="Eggeling L."/>
            <person name="Eikmanns B.J."/>
            <person name="Gaigalat L."/>
            <person name="Goesmann A."/>
            <person name="Hartmann M."/>
            <person name="Huthmacher K."/>
            <person name="Kraemer R."/>
            <person name="Linke B."/>
            <person name="McHardy A.C."/>
            <person name="Meyer F."/>
            <person name="Moeckel B."/>
            <person name="Pfefferle W."/>
            <person name="Puehler A."/>
            <person name="Rey D.A."/>
            <person name="Rueckert C."/>
            <person name="Rupp O."/>
            <person name="Sahm H."/>
            <person name="Wendisch V.F."/>
            <person name="Wiegraebe I."/>
            <person name="Tauch A."/>
        </authorList>
    </citation>
    <scope>NUCLEOTIDE SEQUENCE [LARGE SCALE GENOMIC DNA]</scope>
    <source>
        <strain>ATCC 13032 / DSM 20300 / JCM 1318 / BCRC 11384 / CCUG 27702 / LMG 3730 / NBRC 12168 / NCIMB 10025 / NRRL B-2784 / 534</strain>
    </source>
</reference>
<evidence type="ECO:0000255" key="1">
    <source>
        <dbReference type="HAMAP-Rule" id="MF_01209"/>
    </source>
</evidence>
<name>CARA_CORGL</name>
<proteinExistence type="inferred from homology"/>
<protein>
    <recommendedName>
        <fullName evidence="1">Carbamoyl phosphate synthase small chain</fullName>
        <ecNumber evidence="1">6.3.5.5</ecNumber>
    </recommendedName>
    <alternativeName>
        <fullName evidence="1">Carbamoyl phosphate synthetase glutamine chain</fullName>
    </alternativeName>
</protein>
<keyword id="KW-0028">Amino-acid biosynthesis</keyword>
<keyword id="KW-0055">Arginine biosynthesis</keyword>
<keyword id="KW-0067">ATP-binding</keyword>
<keyword id="KW-0315">Glutamine amidotransferase</keyword>
<keyword id="KW-0436">Ligase</keyword>
<keyword id="KW-0547">Nucleotide-binding</keyword>
<keyword id="KW-0665">Pyrimidine biosynthesis</keyword>
<keyword id="KW-1185">Reference proteome</keyword>
<dbReference type="EC" id="6.3.5.5" evidence="1"/>
<dbReference type="EMBL" id="BA000036">
    <property type="protein sequence ID" value="BAB99003.1"/>
    <property type="molecule type" value="Genomic_DNA"/>
</dbReference>
<dbReference type="EMBL" id="BX927152">
    <property type="protein sequence ID" value="CAF21619.1"/>
    <property type="molecule type" value="Genomic_DNA"/>
</dbReference>
<dbReference type="RefSeq" id="NP_600824.1">
    <property type="nucleotide sequence ID" value="NC_003450.3"/>
</dbReference>
<dbReference type="RefSeq" id="WP_011014478.1">
    <property type="nucleotide sequence ID" value="NC_006958.1"/>
</dbReference>
<dbReference type="SMR" id="P58893"/>
<dbReference type="STRING" id="196627.cg1814"/>
<dbReference type="GeneID" id="1019578"/>
<dbReference type="KEGG" id="cgb:cg1814"/>
<dbReference type="KEGG" id="cgl:Cgl1610"/>
<dbReference type="PATRIC" id="fig|196627.13.peg.1572"/>
<dbReference type="eggNOG" id="COG0505">
    <property type="taxonomic scope" value="Bacteria"/>
</dbReference>
<dbReference type="HOGENOM" id="CLU_035901_2_1_11"/>
<dbReference type="OrthoDB" id="9804328at2"/>
<dbReference type="BioCyc" id="CORYNE:G18NG-11195-MONOMER"/>
<dbReference type="UniPathway" id="UPA00068">
    <property type="reaction ID" value="UER00171"/>
</dbReference>
<dbReference type="UniPathway" id="UPA00070">
    <property type="reaction ID" value="UER00115"/>
</dbReference>
<dbReference type="Proteomes" id="UP000000582">
    <property type="component" value="Chromosome"/>
</dbReference>
<dbReference type="Proteomes" id="UP000001009">
    <property type="component" value="Chromosome"/>
</dbReference>
<dbReference type="GO" id="GO:0005524">
    <property type="term" value="F:ATP binding"/>
    <property type="evidence" value="ECO:0007669"/>
    <property type="project" value="UniProtKB-UniRule"/>
</dbReference>
<dbReference type="GO" id="GO:0004088">
    <property type="term" value="F:carbamoyl-phosphate synthase (glutamine-hydrolyzing) activity"/>
    <property type="evidence" value="ECO:0007669"/>
    <property type="project" value="UniProtKB-UniRule"/>
</dbReference>
<dbReference type="GO" id="GO:0004359">
    <property type="term" value="F:glutaminase activity"/>
    <property type="evidence" value="ECO:0007669"/>
    <property type="project" value="RHEA"/>
</dbReference>
<dbReference type="GO" id="GO:0006207">
    <property type="term" value="P:'de novo' pyrimidine nucleobase biosynthetic process"/>
    <property type="evidence" value="ECO:0007669"/>
    <property type="project" value="InterPro"/>
</dbReference>
<dbReference type="GO" id="GO:0044205">
    <property type="term" value="P:'de novo' UMP biosynthetic process"/>
    <property type="evidence" value="ECO:0007669"/>
    <property type="project" value="UniProtKB-UniRule"/>
</dbReference>
<dbReference type="GO" id="GO:0006541">
    <property type="term" value="P:glutamine metabolic process"/>
    <property type="evidence" value="ECO:0007669"/>
    <property type="project" value="InterPro"/>
</dbReference>
<dbReference type="GO" id="GO:0006526">
    <property type="term" value="P:L-arginine biosynthetic process"/>
    <property type="evidence" value="ECO:0007669"/>
    <property type="project" value="UniProtKB-UniRule"/>
</dbReference>
<dbReference type="CDD" id="cd01744">
    <property type="entry name" value="GATase1_CPSase"/>
    <property type="match status" value="1"/>
</dbReference>
<dbReference type="FunFam" id="3.50.30.20:FF:000001">
    <property type="entry name" value="Carbamoyl-phosphate synthase small chain"/>
    <property type="match status" value="1"/>
</dbReference>
<dbReference type="Gene3D" id="3.40.50.880">
    <property type="match status" value="1"/>
</dbReference>
<dbReference type="Gene3D" id="3.50.30.20">
    <property type="entry name" value="Carbamoyl-phosphate synthase small subunit, N-terminal domain"/>
    <property type="match status" value="1"/>
</dbReference>
<dbReference type="HAMAP" id="MF_01209">
    <property type="entry name" value="CPSase_S_chain"/>
    <property type="match status" value="1"/>
</dbReference>
<dbReference type="InterPro" id="IPR050472">
    <property type="entry name" value="Anth_synth/Amidotransfase"/>
</dbReference>
<dbReference type="InterPro" id="IPR006274">
    <property type="entry name" value="CarbamoylP_synth_ssu"/>
</dbReference>
<dbReference type="InterPro" id="IPR002474">
    <property type="entry name" value="CarbamoylP_synth_ssu_N"/>
</dbReference>
<dbReference type="InterPro" id="IPR036480">
    <property type="entry name" value="CarbP_synth_ssu_N_sf"/>
</dbReference>
<dbReference type="InterPro" id="IPR029062">
    <property type="entry name" value="Class_I_gatase-like"/>
</dbReference>
<dbReference type="InterPro" id="IPR035686">
    <property type="entry name" value="CPSase_GATase1"/>
</dbReference>
<dbReference type="InterPro" id="IPR017926">
    <property type="entry name" value="GATASE"/>
</dbReference>
<dbReference type="NCBIfam" id="TIGR01368">
    <property type="entry name" value="CPSaseIIsmall"/>
    <property type="match status" value="1"/>
</dbReference>
<dbReference type="NCBIfam" id="NF009475">
    <property type="entry name" value="PRK12838.1"/>
    <property type="match status" value="1"/>
</dbReference>
<dbReference type="PANTHER" id="PTHR43418:SF7">
    <property type="entry name" value="CARBAMOYL-PHOSPHATE SYNTHASE SMALL CHAIN"/>
    <property type="match status" value="1"/>
</dbReference>
<dbReference type="PANTHER" id="PTHR43418">
    <property type="entry name" value="MULTIFUNCTIONAL TRYPTOPHAN BIOSYNTHESIS PROTEIN-RELATED"/>
    <property type="match status" value="1"/>
</dbReference>
<dbReference type="Pfam" id="PF00988">
    <property type="entry name" value="CPSase_sm_chain"/>
    <property type="match status" value="1"/>
</dbReference>
<dbReference type="Pfam" id="PF00117">
    <property type="entry name" value="GATase"/>
    <property type="match status" value="1"/>
</dbReference>
<dbReference type="PRINTS" id="PR00097">
    <property type="entry name" value="ANTSNTHASEII"/>
</dbReference>
<dbReference type="PRINTS" id="PR00099">
    <property type="entry name" value="CPSGATASE"/>
</dbReference>
<dbReference type="PRINTS" id="PR00096">
    <property type="entry name" value="GATASE"/>
</dbReference>
<dbReference type="SMART" id="SM01097">
    <property type="entry name" value="CPSase_sm_chain"/>
    <property type="match status" value="1"/>
</dbReference>
<dbReference type="SUPFAM" id="SSF52021">
    <property type="entry name" value="Carbamoyl phosphate synthetase, small subunit N-terminal domain"/>
    <property type="match status" value="1"/>
</dbReference>
<dbReference type="SUPFAM" id="SSF52317">
    <property type="entry name" value="Class I glutamine amidotransferase-like"/>
    <property type="match status" value="1"/>
</dbReference>
<dbReference type="PROSITE" id="PS51273">
    <property type="entry name" value="GATASE_TYPE_1"/>
    <property type="match status" value="1"/>
</dbReference>
<sequence>MSKDTTTYQGVTEIGSVPAYLVLADGRTFTGFGFGAIGTTLGEAVFTTAMTGYQETMTDPSYHRQIVVATAPQIGNTGWNDEDNESRDGKIWVAGLVIRDLAARVSNWRATTSLQQEMAGQGIVGIGGIDTRALVRHLRNEGSIAAGIFSGADAQRPVEELVEIVKNQPAMTGANLSVEVSADETYVIEAEGEERHTVVAYDLGIKQNTPRRFSARGVRTVIVPAETPFEDIKQYNPSGVFISNGPGDPAAADVMVDIVREVLEADIPFFGICFGNQILGRAFGMETYKLKFGHRGINVPVKNHITGKIDITAQNHGFALKGEAGQEFETDFGTAIVTHTCLNDGVVEGIALKSGRAYSVQYHPEAAAGPNDASPLFDQFVELMDADAQKKGA</sequence>
<comment type="function">
    <text evidence="1">Small subunit of the glutamine-dependent carbamoyl phosphate synthetase (CPSase). CPSase catalyzes the formation of carbamoyl phosphate from the ammonia moiety of glutamine, carbonate, and phosphate donated by ATP, constituting the first step of 2 biosynthetic pathways, one leading to arginine and/or urea and the other to pyrimidine nucleotides. The small subunit (glutamine amidotransferase) binds and cleaves glutamine to supply the large subunit with the substrate ammonia.</text>
</comment>
<comment type="catalytic activity">
    <reaction evidence="1">
        <text>hydrogencarbonate + L-glutamine + 2 ATP + H2O = carbamoyl phosphate + L-glutamate + 2 ADP + phosphate + 2 H(+)</text>
        <dbReference type="Rhea" id="RHEA:18633"/>
        <dbReference type="ChEBI" id="CHEBI:15377"/>
        <dbReference type="ChEBI" id="CHEBI:15378"/>
        <dbReference type="ChEBI" id="CHEBI:17544"/>
        <dbReference type="ChEBI" id="CHEBI:29985"/>
        <dbReference type="ChEBI" id="CHEBI:30616"/>
        <dbReference type="ChEBI" id="CHEBI:43474"/>
        <dbReference type="ChEBI" id="CHEBI:58228"/>
        <dbReference type="ChEBI" id="CHEBI:58359"/>
        <dbReference type="ChEBI" id="CHEBI:456216"/>
        <dbReference type="EC" id="6.3.5.5"/>
    </reaction>
</comment>
<comment type="catalytic activity">
    <molecule>Carbamoyl phosphate synthase small chain</molecule>
    <reaction evidence="1">
        <text>L-glutamine + H2O = L-glutamate + NH4(+)</text>
        <dbReference type="Rhea" id="RHEA:15889"/>
        <dbReference type="ChEBI" id="CHEBI:15377"/>
        <dbReference type="ChEBI" id="CHEBI:28938"/>
        <dbReference type="ChEBI" id="CHEBI:29985"/>
        <dbReference type="ChEBI" id="CHEBI:58359"/>
    </reaction>
</comment>
<comment type="pathway">
    <text evidence="1">Amino-acid biosynthesis; L-arginine biosynthesis; carbamoyl phosphate from bicarbonate: step 1/1.</text>
</comment>
<comment type="pathway">
    <text evidence="1">Pyrimidine metabolism; UMP biosynthesis via de novo pathway; (S)-dihydroorotate from bicarbonate: step 1/3.</text>
</comment>
<comment type="subunit">
    <text evidence="1">Composed of two chains; the small (or glutamine) chain promotes the hydrolysis of glutamine to ammonia, which is used by the large (or ammonia) chain to synthesize carbamoyl phosphate. Tetramer of heterodimers (alpha,beta)4.</text>
</comment>
<comment type="similarity">
    <text evidence="1">Belongs to the CarA family.</text>
</comment>
<gene>
    <name evidence="1" type="primary">carA</name>
    <name type="ordered locus">Cgl1610</name>
    <name type="ordered locus">cg1814</name>
</gene>
<organism>
    <name type="scientific">Corynebacterium glutamicum (strain ATCC 13032 / DSM 20300 / JCM 1318 / BCRC 11384 / CCUG 27702 / LMG 3730 / NBRC 12168 / NCIMB 10025 / NRRL B-2784 / 534)</name>
    <dbReference type="NCBI Taxonomy" id="196627"/>
    <lineage>
        <taxon>Bacteria</taxon>
        <taxon>Bacillati</taxon>
        <taxon>Actinomycetota</taxon>
        <taxon>Actinomycetes</taxon>
        <taxon>Mycobacteriales</taxon>
        <taxon>Corynebacteriaceae</taxon>
        <taxon>Corynebacterium</taxon>
    </lineage>
</organism>
<feature type="chain" id="PRO_0000112271" description="Carbamoyl phosphate synthase small chain">
    <location>
        <begin position="1"/>
        <end position="393"/>
    </location>
</feature>
<feature type="domain" description="Glutamine amidotransferase type-1" evidence="1">
    <location>
        <begin position="195"/>
        <end position="390"/>
    </location>
</feature>
<feature type="region of interest" description="CPSase" evidence="1">
    <location>
        <begin position="1"/>
        <end position="194"/>
    </location>
</feature>
<feature type="active site" description="Nucleophile" evidence="1">
    <location>
        <position position="273"/>
    </location>
</feature>
<feature type="active site" evidence="1">
    <location>
        <position position="363"/>
    </location>
</feature>
<feature type="active site" evidence="1">
    <location>
        <position position="365"/>
    </location>
</feature>
<feature type="binding site" evidence="1">
    <location>
        <position position="61"/>
    </location>
    <ligand>
        <name>L-glutamine</name>
        <dbReference type="ChEBI" id="CHEBI:58359"/>
    </ligand>
</feature>
<feature type="binding site" evidence="1">
    <location>
        <position position="245"/>
    </location>
    <ligand>
        <name>L-glutamine</name>
        <dbReference type="ChEBI" id="CHEBI:58359"/>
    </ligand>
</feature>
<feature type="binding site" evidence="1">
    <location>
        <position position="247"/>
    </location>
    <ligand>
        <name>L-glutamine</name>
        <dbReference type="ChEBI" id="CHEBI:58359"/>
    </ligand>
</feature>
<feature type="binding site" evidence="1">
    <location>
        <position position="274"/>
    </location>
    <ligand>
        <name>L-glutamine</name>
        <dbReference type="ChEBI" id="CHEBI:58359"/>
    </ligand>
</feature>
<feature type="binding site" evidence="1">
    <location>
        <position position="277"/>
    </location>
    <ligand>
        <name>L-glutamine</name>
        <dbReference type="ChEBI" id="CHEBI:58359"/>
    </ligand>
</feature>
<feature type="binding site" evidence="1">
    <location>
        <position position="315"/>
    </location>
    <ligand>
        <name>L-glutamine</name>
        <dbReference type="ChEBI" id="CHEBI:58359"/>
    </ligand>
</feature>
<feature type="binding site" evidence="1">
    <location>
        <position position="317"/>
    </location>
    <ligand>
        <name>L-glutamine</name>
        <dbReference type="ChEBI" id="CHEBI:58359"/>
    </ligand>
</feature>
<feature type="binding site" evidence="1">
    <location>
        <position position="318"/>
    </location>
    <ligand>
        <name>L-glutamine</name>
        <dbReference type="ChEBI" id="CHEBI:58359"/>
    </ligand>
</feature>
<accession>P58893</accession>